<keyword id="KW-0067">ATP-binding</keyword>
<keyword id="KW-0997">Cell inner membrane</keyword>
<keyword id="KW-1003">Cell membrane</keyword>
<keyword id="KW-0472">Membrane</keyword>
<keyword id="KW-0547">Nucleotide-binding</keyword>
<keyword id="KW-1185">Reference proteome</keyword>
<keyword id="KW-1278">Translocase</keyword>
<keyword id="KW-0813">Transport</keyword>
<evidence type="ECO:0000255" key="1">
    <source>
        <dbReference type="HAMAP-Rule" id="MF_01708"/>
    </source>
</evidence>
<accession>Q2A4V5</accession>
<proteinExistence type="inferred from homology"/>
<feature type="chain" id="PRO_0000272085" description="Lipoprotein-releasing system ATP-binding protein LolD">
    <location>
        <begin position="1"/>
        <end position="231"/>
    </location>
</feature>
<feature type="domain" description="ABC transporter" evidence="1">
    <location>
        <begin position="6"/>
        <end position="230"/>
    </location>
</feature>
<feature type="binding site" evidence="1">
    <location>
        <begin position="42"/>
        <end position="49"/>
    </location>
    <ligand>
        <name>ATP</name>
        <dbReference type="ChEBI" id="CHEBI:30616"/>
    </ligand>
</feature>
<comment type="function">
    <text evidence="1">Part of the ABC transporter complex LolCDE involved in the translocation of mature outer membrane-directed lipoproteins, from the inner membrane to the periplasmic chaperone, LolA. Responsible for the formation of the LolA-lipoprotein complex in an ATP-dependent manner.</text>
</comment>
<comment type="subunit">
    <text evidence="1">The complex is composed of two ATP-binding proteins (LolD) and two transmembrane proteins (LolC and LolE).</text>
</comment>
<comment type="subcellular location">
    <subcellularLocation>
        <location evidence="1">Cell inner membrane</location>
        <topology evidence="1">Peripheral membrane protein</topology>
    </subcellularLocation>
</comment>
<comment type="similarity">
    <text evidence="1">Belongs to the ABC transporter superfamily. Lipoprotein translocase (TC 3.A.1.125) family.</text>
</comment>
<reference key="1">
    <citation type="submission" date="2006-03" db="EMBL/GenBank/DDBJ databases">
        <title>Complete genome sequence of Francisella tularensis LVS (Live Vaccine Strain).</title>
        <authorList>
            <person name="Chain P."/>
            <person name="Larimer F."/>
            <person name="Land M."/>
            <person name="Stilwagen S."/>
            <person name="Larsson P."/>
            <person name="Bearden S."/>
            <person name="Chu M."/>
            <person name="Oyston P."/>
            <person name="Forsman M."/>
            <person name="Andersson S."/>
            <person name="Lindler L."/>
            <person name="Titball R."/>
            <person name="Garcia E."/>
        </authorList>
    </citation>
    <scope>NUCLEOTIDE SEQUENCE [LARGE SCALE GENOMIC DNA]</scope>
    <source>
        <strain>LVS</strain>
    </source>
</reference>
<organism>
    <name type="scientific">Francisella tularensis subsp. holarctica (strain LVS)</name>
    <dbReference type="NCBI Taxonomy" id="376619"/>
    <lineage>
        <taxon>Bacteria</taxon>
        <taxon>Pseudomonadati</taxon>
        <taxon>Pseudomonadota</taxon>
        <taxon>Gammaproteobacteria</taxon>
        <taxon>Thiotrichales</taxon>
        <taxon>Francisellaceae</taxon>
        <taxon>Francisella</taxon>
    </lineage>
</organism>
<sequence>MNDVVLSCKNVSKKYTEFKTDIAILKDVNLEIKKGEKVAILGLSGSGKTTLLNVLGGLDKCSAGEVYLMGERFDNQSVNKRAKMRNKHLGFIYQLHHLLPEFTAIENVMIPLAITKKYTKKESIKLANEILKKVGLDHRADHKPAELSGGERQRVAIARALVTNPNCILADEPTGNLDSQRSESIFALMQQLSDDFGTSFVIVTHDEKLASRMNKIYRLVDGELELVINSN</sequence>
<gene>
    <name evidence="1" type="primary">lolD</name>
    <name type="ordered locus">FTL_0475</name>
</gene>
<name>LOLD_FRATH</name>
<dbReference type="EC" id="7.6.2.-" evidence="1"/>
<dbReference type="EMBL" id="AM233362">
    <property type="protein sequence ID" value="CAJ78915.1"/>
    <property type="molecule type" value="Genomic_DNA"/>
</dbReference>
<dbReference type="RefSeq" id="WP_003017997.1">
    <property type="nucleotide sequence ID" value="NZ_CP009694.1"/>
</dbReference>
<dbReference type="SMR" id="Q2A4V5"/>
<dbReference type="KEGG" id="ftl:FTL_0475"/>
<dbReference type="Proteomes" id="UP000001944">
    <property type="component" value="Chromosome"/>
</dbReference>
<dbReference type="GO" id="GO:0005886">
    <property type="term" value="C:plasma membrane"/>
    <property type="evidence" value="ECO:0007669"/>
    <property type="project" value="UniProtKB-SubCell"/>
</dbReference>
<dbReference type="GO" id="GO:0005524">
    <property type="term" value="F:ATP binding"/>
    <property type="evidence" value="ECO:0007669"/>
    <property type="project" value="UniProtKB-KW"/>
</dbReference>
<dbReference type="GO" id="GO:0016887">
    <property type="term" value="F:ATP hydrolysis activity"/>
    <property type="evidence" value="ECO:0007669"/>
    <property type="project" value="InterPro"/>
</dbReference>
<dbReference type="GO" id="GO:0022857">
    <property type="term" value="F:transmembrane transporter activity"/>
    <property type="evidence" value="ECO:0007669"/>
    <property type="project" value="TreeGrafter"/>
</dbReference>
<dbReference type="GO" id="GO:0044874">
    <property type="term" value="P:lipoprotein localization to outer membrane"/>
    <property type="evidence" value="ECO:0007669"/>
    <property type="project" value="TreeGrafter"/>
</dbReference>
<dbReference type="GO" id="GO:0089705">
    <property type="term" value="P:protein localization to outer membrane"/>
    <property type="evidence" value="ECO:0007669"/>
    <property type="project" value="TreeGrafter"/>
</dbReference>
<dbReference type="CDD" id="cd03255">
    <property type="entry name" value="ABC_MJ0796_LolCDE_FtsE"/>
    <property type="match status" value="1"/>
</dbReference>
<dbReference type="FunFam" id="3.40.50.300:FF:000230">
    <property type="entry name" value="Lipoprotein-releasing system ATP-binding protein LolD"/>
    <property type="match status" value="1"/>
</dbReference>
<dbReference type="Gene3D" id="3.40.50.300">
    <property type="entry name" value="P-loop containing nucleotide triphosphate hydrolases"/>
    <property type="match status" value="1"/>
</dbReference>
<dbReference type="InterPro" id="IPR003593">
    <property type="entry name" value="AAA+_ATPase"/>
</dbReference>
<dbReference type="InterPro" id="IPR003439">
    <property type="entry name" value="ABC_transporter-like_ATP-bd"/>
</dbReference>
<dbReference type="InterPro" id="IPR017871">
    <property type="entry name" value="ABC_transporter-like_CS"/>
</dbReference>
<dbReference type="InterPro" id="IPR015854">
    <property type="entry name" value="ABC_transpr_LolD-like"/>
</dbReference>
<dbReference type="InterPro" id="IPR011924">
    <property type="entry name" value="LolD_lipo_ATP-bd"/>
</dbReference>
<dbReference type="InterPro" id="IPR017911">
    <property type="entry name" value="MacB-like_ATP-bd"/>
</dbReference>
<dbReference type="InterPro" id="IPR027417">
    <property type="entry name" value="P-loop_NTPase"/>
</dbReference>
<dbReference type="NCBIfam" id="TIGR02211">
    <property type="entry name" value="LolD_lipo_ex"/>
    <property type="match status" value="1"/>
</dbReference>
<dbReference type="PANTHER" id="PTHR24220">
    <property type="entry name" value="IMPORT ATP-BINDING PROTEIN"/>
    <property type="match status" value="1"/>
</dbReference>
<dbReference type="PANTHER" id="PTHR24220:SF689">
    <property type="entry name" value="LIPOPROTEIN-RELEASING SYSTEM ATP-BINDING PROTEIN LOLD"/>
    <property type="match status" value="1"/>
</dbReference>
<dbReference type="Pfam" id="PF00005">
    <property type="entry name" value="ABC_tran"/>
    <property type="match status" value="1"/>
</dbReference>
<dbReference type="SMART" id="SM00382">
    <property type="entry name" value="AAA"/>
    <property type="match status" value="1"/>
</dbReference>
<dbReference type="SUPFAM" id="SSF52540">
    <property type="entry name" value="P-loop containing nucleoside triphosphate hydrolases"/>
    <property type="match status" value="1"/>
</dbReference>
<dbReference type="PROSITE" id="PS00211">
    <property type="entry name" value="ABC_TRANSPORTER_1"/>
    <property type="match status" value="1"/>
</dbReference>
<dbReference type="PROSITE" id="PS50893">
    <property type="entry name" value="ABC_TRANSPORTER_2"/>
    <property type="match status" value="1"/>
</dbReference>
<dbReference type="PROSITE" id="PS51244">
    <property type="entry name" value="LOLD"/>
    <property type="match status" value="1"/>
</dbReference>
<protein>
    <recommendedName>
        <fullName evidence="1">Lipoprotein-releasing system ATP-binding protein LolD</fullName>
        <ecNumber evidence="1">7.6.2.-</ecNumber>
    </recommendedName>
</protein>